<protein>
    <recommendedName>
        <fullName evidence="1">Replication initiation control protein YabA</fullName>
    </recommendedName>
</protein>
<accession>Q2YVV9</accession>
<gene>
    <name evidence="1" type="primary">yabA</name>
    <name type="ordered locus">SAB0435</name>
</gene>
<evidence type="ECO:0000255" key="1">
    <source>
        <dbReference type="HAMAP-Rule" id="MF_01159"/>
    </source>
</evidence>
<comment type="function">
    <text evidence="1">Involved in control of chromosome replication initiation. Inhibits the cooperative binding of DnaA to the oriC region, thus negatively regulating initiation of chromosome replication. Inhibits the ability of DnaA-ATP to form a helix on DNA; does not disassemble preformed DnaA-DNA helices. Decreases the residence time of DnaA on the chromosome at its binding sites (oriC, replication forks and promoter-binding sites). Tethers DnaA to the replication machinery via the DNA polymerase beta sliding clamp subunit (dnaN). Associates with oriC and other DnaA targets on the chromosome in a DnaA-dependent manner.</text>
</comment>
<comment type="cofactor">
    <cofactor evidence="1">
        <name>Zn(2+)</name>
        <dbReference type="ChEBI" id="CHEBI:29105"/>
    </cofactor>
    <text evidence="1">Binds 1 zinc ion per subunit.</text>
</comment>
<comment type="subunit">
    <text evidence="1">Homotetramer. Interacts with both DnaA and DnaN, acting as a bridge between these two proteins.</text>
</comment>
<comment type="subcellular location">
    <subcellularLocation>
        <location evidence="1">Cytoplasm</location>
        <location evidence="1">Nucleoid</location>
    </subcellularLocation>
    <text evidence="1">Localizes in tight foci, which correspond to the replisome at mid-cell throughout the cell cycle.</text>
</comment>
<comment type="similarity">
    <text evidence="1">Belongs to the YabA family.</text>
</comment>
<name>YABA_STAAB</name>
<keyword id="KW-0963">Cytoplasm</keyword>
<keyword id="KW-0235">DNA replication</keyword>
<keyword id="KW-0236">DNA replication inhibitor</keyword>
<keyword id="KW-0479">Metal-binding</keyword>
<keyword id="KW-0862">Zinc</keyword>
<sequence>MDRNEIFEKIMRLEMNVNQLSKETSELKALAVELVEENVALQLENDNLKKVLGNDEPTTIDTANSKPAKAVKKPLPSKDNLAILYGEGFHICKGELFGKHRHGEDCLFCLEVLSD</sequence>
<reference key="1">
    <citation type="journal article" date="2007" name="PLoS ONE">
        <title>Molecular correlates of host specialization in Staphylococcus aureus.</title>
        <authorList>
            <person name="Herron-Olson L."/>
            <person name="Fitzgerald J.R."/>
            <person name="Musser J.M."/>
            <person name="Kapur V."/>
        </authorList>
    </citation>
    <scope>NUCLEOTIDE SEQUENCE [LARGE SCALE GENOMIC DNA]</scope>
    <source>
        <strain>bovine RF122 / ET3-1</strain>
    </source>
</reference>
<organism>
    <name type="scientific">Staphylococcus aureus (strain bovine RF122 / ET3-1)</name>
    <dbReference type="NCBI Taxonomy" id="273036"/>
    <lineage>
        <taxon>Bacteria</taxon>
        <taxon>Bacillati</taxon>
        <taxon>Bacillota</taxon>
        <taxon>Bacilli</taxon>
        <taxon>Bacillales</taxon>
        <taxon>Staphylococcaceae</taxon>
        <taxon>Staphylococcus</taxon>
    </lineage>
</organism>
<dbReference type="EMBL" id="AJ938182">
    <property type="protein sequence ID" value="CAI80123.1"/>
    <property type="molecule type" value="Genomic_DNA"/>
</dbReference>
<dbReference type="RefSeq" id="WP_000375686.1">
    <property type="nucleotide sequence ID" value="NC_007622.1"/>
</dbReference>
<dbReference type="SMR" id="Q2YVV9"/>
<dbReference type="KEGG" id="sab:SAB0435"/>
<dbReference type="HOGENOM" id="CLU_157169_1_0_9"/>
<dbReference type="GO" id="GO:0009295">
    <property type="term" value="C:nucleoid"/>
    <property type="evidence" value="ECO:0007669"/>
    <property type="project" value="UniProtKB-SubCell"/>
</dbReference>
<dbReference type="GO" id="GO:0006260">
    <property type="term" value="P:DNA replication"/>
    <property type="evidence" value="ECO:0007669"/>
    <property type="project" value="UniProtKB-UniRule"/>
</dbReference>
<dbReference type="HAMAP" id="MF_01159">
    <property type="entry name" value="YabA"/>
    <property type="match status" value="1"/>
</dbReference>
<dbReference type="InterPro" id="IPR010377">
    <property type="entry name" value="YabA"/>
</dbReference>
<dbReference type="NCBIfam" id="NF009641">
    <property type="entry name" value="PRK13169.1-2"/>
    <property type="match status" value="1"/>
</dbReference>
<dbReference type="Pfam" id="PF06156">
    <property type="entry name" value="YabA"/>
    <property type="match status" value="1"/>
</dbReference>
<dbReference type="PIRSF" id="PIRSF021439">
    <property type="entry name" value="DUF972"/>
    <property type="match status" value="1"/>
</dbReference>
<proteinExistence type="inferred from homology"/>
<feature type="chain" id="PRO_1000065584" description="Replication initiation control protein YabA">
    <location>
        <begin position="1"/>
        <end position="115"/>
    </location>
</feature>
<feature type="binding site" evidence="1">
    <location>
        <position position="90"/>
    </location>
    <ligand>
        <name>Zn(2+)</name>
        <dbReference type="ChEBI" id="CHEBI:29105"/>
    </ligand>
</feature>
<feature type="binding site" evidence="1">
    <location>
        <position position="92"/>
    </location>
    <ligand>
        <name>Zn(2+)</name>
        <dbReference type="ChEBI" id="CHEBI:29105"/>
    </ligand>
</feature>
<feature type="binding site" evidence="1">
    <location>
        <position position="106"/>
    </location>
    <ligand>
        <name>Zn(2+)</name>
        <dbReference type="ChEBI" id="CHEBI:29105"/>
    </ligand>
</feature>
<feature type="binding site" evidence="1">
    <location>
        <position position="109"/>
    </location>
    <ligand>
        <name>Zn(2+)</name>
        <dbReference type="ChEBI" id="CHEBI:29105"/>
    </ligand>
</feature>